<proteinExistence type="evidence at protein level"/>
<gene>
    <name evidence="17" type="primary">caspa</name>
    <name evidence="17" type="synonym">casp1</name>
    <name evidence="17" type="synonym">caspy</name>
</gene>
<accession>Q9I9L7</accession>
<accession>A0A2U9DQN4</accession>
<comment type="function">
    <text evidence="5 10">Thiol protease which cleaves IL-1 beta (il1b), releasing the mature cytokine which is involved in a variety of inflammatory processes, and mediates apoptosis (PubMed:12464617, PubMed:30150286). Component of the NLRP1 inflammasome, which plays a crucial role in innate immunity and inflammation (PubMed:30150286). In response to pathogens and other damage-associated signals, recruited to the NLRP1 inflammasome in its precursor form (PubMed:30150286). Its subsequent activation causes the cleavage of pro-il1b into the midformed il1b, which then evetually leads to il1b maturation and secretion in the extracellular milieu (PubMed:30150286). Required for the development of the cartilaginous pharyngeal skeleton (PubMed:12464617).</text>
</comment>
<comment type="catalytic activity">
    <reaction evidence="5">
        <text>Strict requirement for an Asp residue at position P1 and has a preferred cleavage sequence of Tyr-Val-Ala-Asp-|-.</text>
        <dbReference type="EC" id="3.4.22.36"/>
    </reaction>
</comment>
<comment type="subunit">
    <text evidence="5 7 9 10 12">Heterotetramer that consists of two anti-parallel arranged heterodimers, each one formed by a 20 kDa (p20) and a 10 kDa (p10) subunit (Probable). Interacts (via pyrin domain) with pycard (via pyrin domain) (PubMed:12464617, PubMed:29791979, PubMed:30150286). Interacts with caspb (PubMed:29791979). Component of NLRP1 inflammasomes (PubMed:30150286). Inflammasomes are supramolecular complexes that assemble in the cytosol in response to pathogens and other damage-associated signals and play critical roles in innate immunity and inflammation (PubMed:30150286). The NLRP1 inflammasome is composed of the signal sensor nlrp1, and the adapter pycard (asc), which recruit effector pro-inflammatory caspases caspa and/or caspb (PubMed:30150286). The interaction between nlrp1 and pycard is required for the sequential recruitment of caspa and then caspb (PubMed:30150286). Caspa is preferentially recruited first and this causes the cleavage of pro-il1b into the midformed il1b (PubMed:30150286). This is followed by the recruitment of caspb, which is activated and cleaves the midformed il1b resulting in il1b maturation (PubMed:30150286). Interacts with caiap (PubMed:29123523).</text>
</comment>
<comment type="subcellular location">
    <subcellularLocation>
        <location evidence="10">Inflammasome</location>
    </subcellularLocation>
    <subcellularLocation>
        <location evidence="5 10">Cytoplasm</location>
    </subcellularLocation>
    <text evidence="5 10">Co-localizes with pycard, nlrp1 and caspb in the cytoplasm (PubMed:30150286). Co-localizes with pycard at large cytoplasmic aggregates, known as specks (PubMed:12464617, PubMed:30150286).</text>
</comment>
<comment type="developmental stage">
    <text evidence="5 6 8">During embryonic development, highly expressed at 8 hours post-fertilization (hpf) (PubMed:28402832). Expressed at the pharyngula stage at 24 hpf and expression is maintained 48 hpf, 72 hpf and to larval day 4 of development at 96 hpf (PubMed:28402832, PubMed:29791492). During this time, expressed in the pharyngeal arches, and in the intestinal bulb at 72 and 96 hpf (PubMed:12464617, PubMed:29791492). Also expressed in the epidermis and mouth at 48 and 72 hpf (PubMed:12464617).</text>
</comment>
<comment type="induction">
    <text evidence="6 10">Up-regulated in response to pentachlorophenol (PCP), a toxic pollutant (PubMed:28402832). Up-regulated in response to bacterial infection with E.tarda (PubMed:30150286).</text>
</comment>
<comment type="PTM">
    <text evidence="12">The two subunits are derived from the precursor sequence by an autocatalytic mechanism.</text>
</comment>
<comment type="disruption phenotype">
    <text evidence="5 10">Morpholino knockdown in early embryos results in abnormalities in the development of the cartilaginous pharyngeal skeleton and eventually results in death upon exhaustion of the yolk (PubMed:12464617). Abnormalities include deformed and thinned Meckel's and palatoquadrate cartilages, deformed ceratohyal cartilages and disorganized branchial cartilages (PubMed:12464617). Morpholino knockdown in one- to four-cell stage embryos results in an open mouth phenotype (PubMed:12464617). Morpholino knockdown in one-cell embryos results in reduced survival in response to bacterial infection with E.tarda, but does not decrease caspb activation (PubMed:30150286). Morpholino knockdown in larvae results in no abnormalities in the brain, eyes or pectoral fins (PubMed:12464617).</text>
</comment>
<comment type="similarity">
    <text evidence="2 3">Belongs to the peptidase C14A family.</text>
</comment>
<evidence type="ECO:0000250" key="1">
    <source>
        <dbReference type="UniProtKB" id="P29466"/>
    </source>
</evidence>
<evidence type="ECO:0000255" key="2"/>
<evidence type="ECO:0000255" key="3">
    <source>
        <dbReference type="RuleBase" id="RU003971"/>
    </source>
</evidence>
<evidence type="ECO:0000256" key="4">
    <source>
        <dbReference type="SAM" id="MobiDB-lite"/>
    </source>
</evidence>
<evidence type="ECO:0000269" key="5">
    <source>
    </source>
</evidence>
<evidence type="ECO:0000269" key="6">
    <source>
    </source>
</evidence>
<evidence type="ECO:0000269" key="7">
    <source>
    </source>
</evidence>
<evidence type="ECO:0000269" key="8">
    <source>
    </source>
</evidence>
<evidence type="ECO:0000269" key="9">
    <source>
    </source>
</evidence>
<evidence type="ECO:0000269" key="10">
    <source>
    </source>
</evidence>
<evidence type="ECO:0000305" key="11"/>
<evidence type="ECO:0000305" key="12">
    <source>
    </source>
</evidence>
<evidence type="ECO:0000312" key="13">
    <source>
        <dbReference type="EMBL" id="AAF66964.1"/>
    </source>
</evidence>
<evidence type="ECO:0000312" key="14">
    <source>
        <dbReference type="EMBL" id="AAH95022.1"/>
    </source>
</evidence>
<evidence type="ECO:0000312" key="15">
    <source>
        <dbReference type="EMBL" id="AWP39886.1"/>
    </source>
</evidence>
<evidence type="ECO:0000312" key="16">
    <source>
        <dbReference type="Proteomes" id="UP000000437"/>
    </source>
</evidence>
<evidence type="ECO:0000312" key="17">
    <source>
        <dbReference type="ZFIN" id="ZDB-GENE-000616-3"/>
    </source>
</evidence>
<protein>
    <recommendedName>
        <fullName evidence="17">Caspase a</fullName>
        <ecNumber evidence="5">3.4.22.36</ecNumber>
    </recommendedName>
    <component>
        <recommendedName>
            <fullName evidence="12">Caspase a subunit p20</fullName>
        </recommendedName>
    </component>
    <component>
        <recommendedName>
            <fullName evidence="12">Caspase a subunit p10</fullName>
        </recommendedName>
    </component>
</protein>
<dbReference type="EC" id="3.4.22.36" evidence="5"/>
<dbReference type="EMBL" id="MG957992">
    <property type="protein sequence ID" value="AWP39886.1"/>
    <property type="molecule type" value="mRNA"/>
</dbReference>
<dbReference type="EMBL" id="AF233434">
    <property type="protein sequence ID" value="AAF66964.1"/>
    <property type="molecule type" value="mRNA"/>
</dbReference>
<dbReference type="EMBL" id="BX649388">
    <property type="status" value="NOT_ANNOTATED_CDS"/>
    <property type="molecule type" value="Genomic_DNA"/>
</dbReference>
<dbReference type="EMBL" id="BC095022">
    <property type="protein sequence ID" value="AAH95022.1"/>
    <property type="molecule type" value="mRNA"/>
</dbReference>
<dbReference type="EMBL" id="BC164780">
    <property type="protein sequence ID" value="AAI64780.1"/>
    <property type="molecule type" value="mRNA"/>
</dbReference>
<dbReference type="RefSeq" id="NP_571580.1">
    <property type="nucleotide sequence ID" value="NM_131505.2"/>
</dbReference>
<dbReference type="SMR" id="Q9I9L7"/>
<dbReference type="ComplexPortal" id="CPX-4947">
    <property type="entry name" value="NLRP1 inflammasome, variant 1"/>
</dbReference>
<dbReference type="ComplexPortal" id="CPX-4948">
    <property type="entry name" value="NLRP1 inflammasome, variant 2"/>
</dbReference>
<dbReference type="FunCoup" id="Q9I9L7">
    <property type="interactions" value="1426"/>
</dbReference>
<dbReference type="IntAct" id="Q9I9L7">
    <property type="interactions" value="1"/>
</dbReference>
<dbReference type="STRING" id="7955.ENSDARP00000034228"/>
<dbReference type="MEROPS" id="C14.030"/>
<dbReference type="PaxDb" id="7955-ENSDARP00000034228"/>
<dbReference type="Ensembl" id="ENSDART00000034544">
    <property type="protein sequence ID" value="ENSDARP00000034228"/>
    <property type="gene ID" value="ENSDARG00000008165"/>
</dbReference>
<dbReference type="GeneID" id="57933"/>
<dbReference type="KEGG" id="dre:57933"/>
<dbReference type="AGR" id="ZFIN:ZDB-GENE-000616-3"/>
<dbReference type="CTD" id="57933"/>
<dbReference type="ZFIN" id="ZDB-GENE-000616-3">
    <property type="gene designation" value="caspa"/>
</dbReference>
<dbReference type="eggNOG" id="KOG3573">
    <property type="taxonomic scope" value="Eukaryota"/>
</dbReference>
<dbReference type="HOGENOM" id="CLU_036904_0_1_1"/>
<dbReference type="InParanoid" id="Q9I9L7"/>
<dbReference type="OMA" id="LICNIDF"/>
<dbReference type="OrthoDB" id="6097640at2759"/>
<dbReference type="PhylomeDB" id="Q9I9L7"/>
<dbReference type="TreeFam" id="TF102023"/>
<dbReference type="PRO" id="PR:Q9I9L7"/>
<dbReference type="Proteomes" id="UP000000437">
    <property type="component" value="Chromosome 16"/>
</dbReference>
<dbReference type="Bgee" id="ENSDARG00000008165">
    <property type="expression patterns" value="Expressed in granulocyte and 16 other cell types or tissues"/>
</dbReference>
<dbReference type="GO" id="GO:0061702">
    <property type="term" value="C:canonical inflammasome complex"/>
    <property type="evidence" value="ECO:0000353"/>
    <property type="project" value="ZFIN"/>
</dbReference>
<dbReference type="GO" id="GO:0005737">
    <property type="term" value="C:cytoplasm"/>
    <property type="evidence" value="ECO:0000318"/>
    <property type="project" value="GO_Central"/>
</dbReference>
<dbReference type="GO" id="GO:0005829">
    <property type="term" value="C:cytosol"/>
    <property type="evidence" value="ECO:0000318"/>
    <property type="project" value="GO_Central"/>
</dbReference>
<dbReference type="GO" id="GO:0072558">
    <property type="term" value="C:NLRP1 inflammasome complex"/>
    <property type="evidence" value="ECO:0000314"/>
    <property type="project" value="ComplexPortal"/>
</dbReference>
<dbReference type="GO" id="GO:0004197">
    <property type="term" value="F:cysteine-type endopeptidase activity"/>
    <property type="evidence" value="ECO:0000314"/>
    <property type="project" value="ZFIN"/>
</dbReference>
<dbReference type="GO" id="GO:0004175">
    <property type="term" value="F:endopeptidase activity"/>
    <property type="evidence" value="ECO:0000314"/>
    <property type="project" value="ZFIN"/>
</dbReference>
<dbReference type="GO" id="GO:0032090">
    <property type="term" value="F:Pyrin domain binding"/>
    <property type="evidence" value="ECO:0000353"/>
    <property type="project" value="ZFIN"/>
</dbReference>
<dbReference type="GO" id="GO:0048703">
    <property type="term" value="P:embryonic viscerocranium morphogenesis"/>
    <property type="evidence" value="ECO:0000315"/>
    <property type="project" value="ZFIN"/>
</dbReference>
<dbReference type="GO" id="GO:0045087">
    <property type="term" value="P:innate immune response"/>
    <property type="evidence" value="ECO:0000316"/>
    <property type="project" value="ZFIN"/>
</dbReference>
<dbReference type="GO" id="GO:0002221">
    <property type="term" value="P:pattern recognition receptor signaling pathway"/>
    <property type="evidence" value="ECO:0000303"/>
    <property type="project" value="ComplexPortal"/>
</dbReference>
<dbReference type="GO" id="GO:0043065">
    <property type="term" value="P:positive regulation of apoptotic process"/>
    <property type="evidence" value="ECO:0000314"/>
    <property type="project" value="ZFIN"/>
</dbReference>
<dbReference type="GO" id="GO:0050729">
    <property type="term" value="P:positive regulation of inflammatory response"/>
    <property type="evidence" value="ECO:0000318"/>
    <property type="project" value="GO_Central"/>
</dbReference>
<dbReference type="GO" id="GO:0032731">
    <property type="term" value="P:positive regulation of interleukin-1 beta production"/>
    <property type="evidence" value="ECO:0000303"/>
    <property type="project" value="ComplexPortal"/>
</dbReference>
<dbReference type="GO" id="GO:0043525">
    <property type="term" value="P:positive regulation of neuron apoptotic process"/>
    <property type="evidence" value="ECO:0000318"/>
    <property type="project" value="GO_Central"/>
</dbReference>
<dbReference type="GO" id="GO:0010954">
    <property type="term" value="P:positive regulation of protein processing"/>
    <property type="evidence" value="ECO:0000314"/>
    <property type="project" value="ZFIN"/>
</dbReference>
<dbReference type="GO" id="GO:0070269">
    <property type="term" value="P:pyroptotic inflammatory response"/>
    <property type="evidence" value="ECO:0000316"/>
    <property type="project" value="ZFIN"/>
</dbReference>
<dbReference type="GO" id="GO:0097264">
    <property type="term" value="P:self proteolysis"/>
    <property type="evidence" value="ECO:0000314"/>
    <property type="project" value="ZFIN"/>
</dbReference>
<dbReference type="CDD" id="cd00032">
    <property type="entry name" value="CASc"/>
    <property type="match status" value="1"/>
</dbReference>
<dbReference type="FunFam" id="3.40.50.1460:FF:000032">
    <property type="entry name" value="Caspase 1"/>
    <property type="match status" value="1"/>
</dbReference>
<dbReference type="Gene3D" id="3.40.50.1460">
    <property type="match status" value="1"/>
</dbReference>
<dbReference type="Gene3D" id="1.10.533.10">
    <property type="entry name" value="Death Domain, Fas"/>
    <property type="match status" value="1"/>
</dbReference>
<dbReference type="InterPro" id="IPR029030">
    <property type="entry name" value="Caspase-like_dom_sf"/>
</dbReference>
<dbReference type="InterPro" id="IPR033139">
    <property type="entry name" value="Caspase_cys_AS"/>
</dbReference>
<dbReference type="InterPro" id="IPR016129">
    <property type="entry name" value="Caspase_his_AS"/>
</dbReference>
<dbReference type="InterPro" id="IPR004020">
    <property type="entry name" value="DAPIN"/>
</dbReference>
<dbReference type="InterPro" id="IPR011029">
    <property type="entry name" value="DEATH-like_dom_sf"/>
</dbReference>
<dbReference type="InterPro" id="IPR002398">
    <property type="entry name" value="Pept_C14"/>
</dbReference>
<dbReference type="InterPro" id="IPR011600">
    <property type="entry name" value="Pept_C14_caspase"/>
</dbReference>
<dbReference type="InterPro" id="IPR002138">
    <property type="entry name" value="Pept_C14_p10"/>
</dbReference>
<dbReference type="InterPro" id="IPR001309">
    <property type="entry name" value="Pept_C14_p20"/>
</dbReference>
<dbReference type="InterPro" id="IPR015917">
    <property type="entry name" value="Pept_C14A"/>
</dbReference>
<dbReference type="PANTHER" id="PTHR47901">
    <property type="entry name" value="CASPASE RECRUITMENT DOMAIN-CONTAINING PROTEIN 18"/>
    <property type="match status" value="1"/>
</dbReference>
<dbReference type="PANTHER" id="PTHR47901:SF3">
    <property type="entry name" value="CASPASE-1"/>
    <property type="match status" value="1"/>
</dbReference>
<dbReference type="Pfam" id="PF00656">
    <property type="entry name" value="Peptidase_C14"/>
    <property type="match status" value="1"/>
</dbReference>
<dbReference type="Pfam" id="PF02758">
    <property type="entry name" value="PYRIN"/>
    <property type="match status" value="1"/>
</dbReference>
<dbReference type="PIRSF" id="PIRSF038001">
    <property type="entry name" value="Caspase_ICE"/>
    <property type="match status" value="1"/>
</dbReference>
<dbReference type="PRINTS" id="PR00376">
    <property type="entry name" value="IL1BCENZYME"/>
</dbReference>
<dbReference type="SMART" id="SM00115">
    <property type="entry name" value="CASc"/>
    <property type="match status" value="1"/>
</dbReference>
<dbReference type="SMART" id="SM01289">
    <property type="entry name" value="PYRIN"/>
    <property type="match status" value="1"/>
</dbReference>
<dbReference type="SUPFAM" id="SSF52129">
    <property type="entry name" value="Caspase-like"/>
    <property type="match status" value="1"/>
</dbReference>
<dbReference type="SUPFAM" id="SSF47986">
    <property type="entry name" value="DEATH domain"/>
    <property type="match status" value="1"/>
</dbReference>
<dbReference type="PROSITE" id="PS01122">
    <property type="entry name" value="CASPASE_CYS"/>
    <property type="match status" value="1"/>
</dbReference>
<dbReference type="PROSITE" id="PS01121">
    <property type="entry name" value="CASPASE_HIS"/>
    <property type="match status" value="1"/>
</dbReference>
<dbReference type="PROSITE" id="PS50207">
    <property type="entry name" value="CASPASE_P10"/>
    <property type="match status" value="1"/>
</dbReference>
<dbReference type="PROSITE" id="PS50208">
    <property type="entry name" value="CASPASE_P20"/>
    <property type="match status" value="1"/>
</dbReference>
<dbReference type="PROSITE" id="PS50824">
    <property type="entry name" value="DAPIN"/>
    <property type="match status" value="1"/>
</dbReference>
<reference evidence="15" key="1">
    <citation type="journal article" date="2018" name="PLoS ONE">
        <title>Characterization of the caspase family in zebrafish.</title>
        <authorList>
            <person name="Spead O."/>
            <person name="Verreet T."/>
            <person name="Donelson C.J."/>
            <person name="Poulain F.E."/>
        </authorList>
    </citation>
    <scope>NUCLEOTIDE SEQUENCE [MRNA]</scope>
    <scope>DEVELOPMENTAL STAGE</scope>
</reference>
<reference evidence="13" key="2">
    <citation type="journal article" date="2000" name="Cell Death Differ.">
        <title>Genes with homology to mammalian apoptosis regulators identified in zebrafish.</title>
        <authorList>
            <person name="Inohara N."/>
            <person name="Nunez G."/>
        </authorList>
    </citation>
    <scope>NUCLEOTIDE SEQUENCE [MRNA]</scope>
</reference>
<reference evidence="16" key="3">
    <citation type="journal article" date="2013" name="Nature">
        <title>The zebrafish reference genome sequence and its relationship to the human genome.</title>
        <authorList>
            <person name="Howe K."/>
            <person name="Clark M.D."/>
            <person name="Torroja C.F."/>
            <person name="Torrance J."/>
            <person name="Berthelot C."/>
            <person name="Muffato M."/>
            <person name="Collins J.E."/>
            <person name="Humphray S."/>
            <person name="McLaren K."/>
            <person name="Matthews L."/>
            <person name="McLaren S."/>
            <person name="Sealy I."/>
            <person name="Caccamo M."/>
            <person name="Churcher C."/>
            <person name="Scott C."/>
            <person name="Barrett J.C."/>
            <person name="Koch R."/>
            <person name="Rauch G.J."/>
            <person name="White S."/>
            <person name="Chow W."/>
            <person name="Kilian B."/>
            <person name="Quintais L.T."/>
            <person name="Guerra-Assuncao J.A."/>
            <person name="Zhou Y."/>
            <person name="Gu Y."/>
            <person name="Yen J."/>
            <person name="Vogel J.H."/>
            <person name="Eyre T."/>
            <person name="Redmond S."/>
            <person name="Banerjee R."/>
            <person name="Chi J."/>
            <person name="Fu B."/>
            <person name="Langley E."/>
            <person name="Maguire S.F."/>
            <person name="Laird G.K."/>
            <person name="Lloyd D."/>
            <person name="Kenyon E."/>
            <person name="Donaldson S."/>
            <person name="Sehra H."/>
            <person name="Almeida-King J."/>
            <person name="Loveland J."/>
            <person name="Trevanion S."/>
            <person name="Jones M."/>
            <person name="Quail M."/>
            <person name="Willey D."/>
            <person name="Hunt A."/>
            <person name="Burton J."/>
            <person name="Sims S."/>
            <person name="McLay K."/>
            <person name="Plumb B."/>
            <person name="Davis J."/>
            <person name="Clee C."/>
            <person name="Oliver K."/>
            <person name="Clark R."/>
            <person name="Riddle C."/>
            <person name="Elliot D."/>
            <person name="Threadgold G."/>
            <person name="Harden G."/>
            <person name="Ware D."/>
            <person name="Begum S."/>
            <person name="Mortimore B."/>
            <person name="Kerry G."/>
            <person name="Heath P."/>
            <person name="Phillimore B."/>
            <person name="Tracey A."/>
            <person name="Corby N."/>
            <person name="Dunn M."/>
            <person name="Johnson C."/>
            <person name="Wood J."/>
            <person name="Clark S."/>
            <person name="Pelan S."/>
            <person name="Griffiths G."/>
            <person name="Smith M."/>
            <person name="Glithero R."/>
            <person name="Howden P."/>
            <person name="Barker N."/>
            <person name="Lloyd C."/>
            <person name="Stevens C."/>
            <person name="Harley J."/>
            <person name="Holt K."/>
            <person name="Panagiotidis G."/>
            <person name="Lovell J."/>
            <person name="Beasley H."/>
            <person name="Henderson C."/>
            <person name="Gordon D."/>
            <person name="Auger K."/>
            <person name="Wright D."/>
            <person name="Collins J."/>
            <person name="Raisen C."/>
            <person name="Dyer L."/>
            <person name="Leung K."/>
            <person name="Robertson L."/>
            <person name="Ambridge K."/>
            <person name="Leongamornlert D."/>
            <person name="McGuire S."/>
            <person name="Gilderthorp R."/>
            <person name="Griffiths C."/>
            <person name="Manthravadi D."/>
            <person name="Nichol S."/>
            <person name="Barker G."/>
            <person name="Whitehead S."/>
            <person name="Kay M."/>
            <person name="Brown J."/>
            <person name="Murnane C."/>
            <person name="Gray E."/>
            <person name="Humphries M."/>
            <person name="Sycamore N."/>
            <person name="Barker D."/>
            <person name="Saunders D."/>
            <person name="Wallis J."/>
            <person name="Babbage A."/>
            <person name="Hammond S."/>
            <person name="Mashreghi-Mohammadi M."/>
            <person name="Barr L."/>
            <person name="Martin S."/>
            <person name="Wray P."/>
            <person name="Ellington A."/>
            <person name="Matthews N."/>
            <person name="Ellwood M."/>
            <person name="Woodmansey R."/>
            <person name="Clark G."/>
            <person name="Cooper J."/>
            <person name="Tromans A."/>
            <person name="Grafham D."/>
            <person name="Skuce C."/>
            <person name="Pandian R."/>
            <person name="Andrews R."/>
            <person name="Harrison E."/>
            <person name="Kimberley A."/>
            <person name="Garnett J."/>
            <person name="Fosker N."/>
            <person name="Hall R."/>
            <person name="Garner P."/>
            <person name="Kelly D."/>
            <person name="Bird C."/>
            <person name="Palmer S."/>
            <person name="Gehring I."/>
            <person name="Berger A."/>
            <person name="Dooley C.M."/>
            <person name="Ersan-Urun Z."/>
            <person name="Eser C."/>
            <person name="Geiger H."/>
            <person name="Geisler M."/>
            <person name="Karotki L."/>
            <person name="Kirn A."/>
            <person name="Konantz J."/>
            <person name="Konantz M."/>
            <person name="Oberlander M."/>
            <person name="Rudolph-Geiger S."/>
            <person name="Teucke M."/>
            <person name="Lanz C."/>
            <person name="Raddatz G."/>
            <person name="Osoegawa K."/>
            <person name="Zhu B."/>
            <person name="Rapp A."/>
            <person name="Widaa S."/>
            <person name="Langford C."/>
            <person name="Yang F."/>
            <person name="Schuster S.C."/>
            <person name="Carter N.P."/>
            <person name="Harrow J."/>
            <person name="Ning Z."/>
            <person name="Herrero J."/>
            <person name="Searle S.M."/>
            <person name="Enright A."/>
            <person name="Geisler R."/>
            <person name="Plasterk R.H."/>
            <person name="Lee C."/>
            <person name="Westerfield M."/>
            <person name="de Jong P.J."/>
            <person name="Zon L.I."/>
            <person name="Postlethwait J.H."/>
            <person name="Nusslein-Volhard C."/>
            <person name="Hubbard T.J."/>
            <person name="Roest Crollius H."/>
            <person name="Rogers J."/>
            <person name="Stemple D.L."/>
        </authorList>
    </citation>
    <scope>NUCLEOTIDE SEQUENCE [LARGE SCALE GENOMIC DNA]</scope>
    <source>
        <strain evidence="16">Tuebingen</strain>
    </source>
</reference>
<reference evidence="14" key="4">
    <citation type="submission" date="2005-05" db="EMBL/GenBank/DDBJ databases">
        <authorList>
            <consortium name="NIH - Zebrafish Gene Collection (ZGC) project"/>
        </authorList>
    </citation>
    <scope>NUCLEOTIDE SEQUENCE [LARGE SCALE MRNA]</scope>
    <source>
        <tissue evidence="14">Larva</tissue>
    </source>
</reference>
<reference evidence="11" key="5">
    <citation type="journal article" date="2003" name="J. Biol. Chem.">
        <title>Caspy, a zebrafish caspase, activated by ASC oligomerization is required for pharyngeal arch development.</title>
        <authorList>
            <person name="Masumoto J."/>
            <person name="Zhou W."/>
            <person name="Chen F.F."/>
            <person name="Su F."/>
            <person name="Kuwada J.Y."/>
            <person name="Hidaka E."/>
            <person name="Katsuyama T."/>
            <person name="Sagara J."/>
            <person name="Taniguchi S."/>
            <person name="Ngo-Hazelett P."/>
            <person name="Postlethwait J.H."/>
            <person name="Nunez G."/>
            <person name="Inohara N."/>
        </authorList>
    </citation>
    <scope>FUNCTION</scope>
    <scope>CATALYTIC ACTIVITY</scope>
    <scope>INTERACTION WITH PYCARD</scope>
    <scope>SUBCELLULAR LOCATION</scope>
    <scope>DEVELOPMENTAL STAGE</scope>
    <scope>DISRUPTION PHENOTYPE</scope>
</reference>
<reference evidence="11" key="6">
    <citation type="journal article" date="2017" name="Chemosphere">
        <title>Early developmental exposure to pentachlorophenol causes alterations on mRNA expressions of caspase protease family in zebrafish embryos.</title>
        <authorList>
            <person name="Zhao J."/>
            <person name="Huang G."/>
            <person name="Xu T."/>
            <person name="Yin D."/>
            <person name="Bai J."/>
            <person name="Gu W."/>
        </authorList>
    </citation>
    <scope>DEVELOPMENTAL STAGE</scope>
    <scope>INDUCTION BY PENTACHLOROPHENOL</scope>
</reference>
<reference evidence="11" key="7">
    <citation type="journal article" date="2017" name="Front. Immunol.">
        <title>Identification of an Evolutionarily Conserved Ankyrin Domain-Containing Protein, Caiap, Which Regulates Inflammasome-Dependent Resistance to Bacterial Infection.</title>
        <authorList>
            <person name="Tyrkalska S.D."/>
            <person name="Candel S."/>
            <person name="Perez-Oliva A.B."/>
            <person name="Valera A."/>
            <person name="Alcaraz-Perez F."/>
            <person name="Garcia-Moreno D."/>
            <person name="Cayuela M.L."/>
            <person name="Mulero V."/>
        </authorList>
    </citation>
    <scope>INTERACTION WITH CAIAP</scope>
</reference>
<reference evidence="11" key="8">
    <citation type="journal article" date="2018" name="FEBS J.">
        <title>Functional and structural characterization of zebrafish ASC.</title>
        <authorList>
            <person name="Li Y."/>
            <person name="Huang Y."/>
            <person name="Cao X."/>
            <person name="Yin X."/>
            <person name="Jin X."/>
            <person name="Liu S."/>
            <person name="Jiang J."/>
            <person name="Jiang W."/>
            <person name="Xiao T.S."/>
            <person name="Zhou R."/>
            <person name="Cai G."/>
            <person name="Hu B."/>
            <person name="Jin T."/>
        </authorList>
    </citation>
    <scope>INTERACTION WITH PYCARD AND CASPB</scope>
</reference>
<reference evidence="11" key="9">
    <citation type="journal article" date="2018" name="J. Immunol.">
        <title>Characterization of an NLRP1 Inflammasome from Zebrafish Reveals a Unique Sequential Activation Mechanism Underlying Inflammatory Caspases in Ancient Vertebrates.</title>
        <authorList>
            <person name="Li J.Y."/>
            <person name="Gao K."/>
            <person name="Shao T."/>
            <person name="Fan D.D."/>
            <person name="Hu C.B."/>
            <person name="Sun C.C."/>
            <person name="Dong W.R."/>
            <person name="Lin A.F."/>
            <person name="Xiang L.X."/>
            <person name="Shao J.Z."/>
        </authorList>
    </citation>
    <scope>FUNCTION</scope>
    <scope>PROTEOLYTIC CLEAVAGE</scope>
    <scope>IDENTIFICATION IN NLRP1 INFLAMMASOME</scope>
    <scope>INTERACTION WITH PYCARD</scope>
    <scope>SUBCELLULAR LOCATION</scope>
    <scope>INDUCTION BY E.TARDA</scope>
    <scope>DISRUPTION PHENOTYPE</scope>
</reference>
<keyword id="KW-0963">Cytoplasm</keyword>
<keyword id="KW-0378">Hydrolase</keyword>
<keyword id="KW-1271">Inflammasome</keyword>
<keyword id="KW-0645">Protease</keyword>
<keyword id="KW-1185">Reference proteome</keyword>
<keyword id="KW-0788">Thiol protease</keyword>
<keyword id="KW-0865">Zymogen</keyword>
<organism evidence="13">
    <name type="scientific">Danio rerio</name>
    <name type="common">Zebrafish</name>
    <name type="synonym">Brachydanio rerio</name>
    <dbReference type="NCBI Taxonomy" id="7955"/>
    <lineage>
        <taxon>Eukaryota</taxon>
        <taxon>Metazoa</taxon>
        <taxon>Chordata</taxon>
        <taxon>Craniata</taxon>
        <taxon>Vertebrata</taxon>
        <taxon>Euteleostomi</taxon>
        <taxon>Actinopterygii</taxon>
        <taxon>Neopterygii</taxon>
        <taxon>Teleostei</taxon>
        <taxon>Ostariophysi</taxon>
        <taxon>Cypriniformes</taxon>
        <taxon>Danionidae</taxon>
        <taxon>Danioninae</taxon>
        <taxon>Danio</taxon>
    </lineage>
</organism>
<feature type="propeptide" id="PRO_0000448780" evidence="11">
    <location>
        <begin position="1"/>
        <end position="142"/>
    </location>
</feature>
<feature type="chain" id="PRO_0000448781" description="Caspase a subunit p20">
    <location>
        <begin position="143"/>
        <end position="274"/>
    </location>
</feature>
<feature type="propeptide" id="PRO_0000448782" evidence="11">
    <location>
        <begin position="275"/>
        <end position="296"/>
    </location>
</feature>
<feature type="chain" id="PRO_0000448783" description="Caspase a subunit p10">
    <location>
        <begin position="297"/>
        <end position="383"/>
    </location>
</feature>
<feature type="domain" description="Pyrin" evidence="2">
    <location>
        <begin position="8"/>
        <end position="81"/>
    </location>
</feature>
<feature type="region of interest" description="Disordered" evidence="4">
    <location>
        <begin position="87"/>
        <end position="106"/>
    </location>
</feature>
<feature type="active site" evidence="1">
    <location>
        <position position="220"/>
    </location>
</feature>
<feature type="active site" evidence="1">
    <location>
        <position position="270"/>
    </location>
</feature>
<feature type="sequence conflict" description="In Ref. 1; AWP39886." evidence="11" ref="1">
    <original>L</original>
    <variation>V</variation>
    <location>
        <position position="51"/>
    </location>
</feature>
<feature type="sequence conflict" description="In Ref. 1; AWP39886." evidence="11" ref="1">
    <original>S</original>
    <variation>F</variation>
    <location>
        <position position="65"/>
    </location>
</feature>
<feature type="sequence conflict" description="In Ref. 1; AWP39886." evidence="11" ref="1">
    <original>V</original>
    <variation>I</variation>
    <location>
        <position position="99"/>
    </location>
</feature>
<feature type="sequence conflict" description="In Ref. 1; AWP39886." evidence="11" ref="1">
    <original>T</original>
    <variation>I</variation>
    <location>
        <position position="134"/>
    </location>
</feature>
<feature type="sequence conflict" description="In Ref. 1; AWP39886." evidence="11" ref="1">
    <original>S</original>
    <variation>A</variation>
    <location>
        <position position="165"/>
    </location>
</feature>
<feature type="sequence conflict" description="In Ref. 1; AWP39886." evidence="11" ref="1">
    <original>K</original>
    <variation>M</variation>
    <location>
        <position position="177"/>
    </location>
</feature>
<feature type="sequence conflict" description="In Ref. 1; AWP39886." evidence="11" ref="1">
    <original>R</original>
    <variation>H</variation>
    <location>
        <position position="249"/>
    </location>
</feature>
<feature type="sequence conflict" description="In Ref. 1; AWP39886." evidence="11" ref="1">
    <original>I</original>
    <variation>M</variation>
    <location>
        <position position="289"/>
    </location>
</feature>
<feature type="sequence conflict" description="In Ref. 1; AWP39886." evidence="11" ref="1">
    <original>EH</original>
    <variation>DN</variation>
    <location>
        <begin position="354"/>
        <end position="355"/>
    </location>
</feature>
<name>CASPA_DANRE</name>
<sequence length="383" mass="43966">MAKSIKDHLQDALSNIGADNLRRFQSRLGDRKQEPRVRKSTIEKLKDEIDLVDLLVNTFTSDAVSVTVDILRGIKCNAVAEELLENTGQGGVSQPEPPVPEPIPKDPAQLKELKVTPCSQQFKNKILREKGQETYEIKDKSVRKRLALLINNVDFDDKAMKRSGSEKDEENMEKLLKELDYQVVKRPNLSAKEMDEAIRDFAQREEHKYSDSAFVVIMSHGKRDAIMGVHYHRTNNPSDSFPVDNVYRRLNSENCPALRDKPKVILIQACRGGEHGRVWASDGEPDEPIEIEDDDFVHKEKDFISLMSCTPDTKSYRHVQNGTFYVQTLVDVFIKCAHEDHIEELFRKVLRRFEHPNMIGNFKQMACKDRATLPKLFYLFPGL</sequence>